<gene>
    <name type="primary">S2</name>
</gene>
<dbReference type="EMBL" id="AY277889">
    <property type="protein sequence ID" value="AAP45578.1"/>
    <property type="molecule type" value="Genomic_RNA"/>
</dbReference>
<dbReference type="RefSeq" id="YP_001936005.1">
    <property type="nucleotide sequence ID" value="NC_010744.1"/>
</dbReference>
<dbReference type="KEGG" id="vg:6336087"/>
<dbReference type="Proteomes" id="UP000006719">
    <property type="component" value="Genome"/>
</dbReference>
<reference key="1">
    <citation type="journal article" date="2004" name="J. Virol.">
        <title>A reovirus of the fungus Cryphonectria parasitica that is infectious as particles and related to the coltivirus genus of animal pathogens.</title>
        <authorList>
            <person name="Hillman B.I."/>
            <person name="Supyani S."/>
            <person name="Kondo H."/>
            <person name="Suzuki N."/>
        </authorList>
    </citation>
    <scope>NUCLEOTIDE SEQUENCE [GENOMIC RNA]</scope>
</reference>
<evidence type="ECO:0000250" key="1">
    <source>
        <dbReference type="UniProtKB" id="P15024"/>
    </source>
</evidence>
<evidence type="ECO:0000256" key="2">
    <source>
        <dbReference type="SAM" id="MobiDB-lite"/>
    </source>
</evidence>
<evidence type="ECO:0000305" key="3"/>
<comment type="function">
    <text evidence="1">Inner capsid protein that self-assembles to form an icosahedral capsid with a T=2 symmetry, which consists of 120 copies of VP2, with channels at each of its five-fold vertices. This capsid constitutes the innermost concentric layer of the viral mature particle.</text>
</comment>
<comment type="subunit">
    <text evidence="1">Homodecamer; each decamer is made up of two conformers of VP2, called VP2A and VP2B. 12 homodecamers assemble to form an icosahedral capsid.</text>
</comment>
<comment type="subcellular location">
    <subcellularLocation>
        <location evidence="1">Virion</location>
    </subcellularLocation>
    <text evidence="1">Found in the inner capsid (120 copies).</text>
</comment>
<comment type="miscellaneous">
    <text evidence="3">Function inferred by structural homology with BTV-fold inner capsid family.</text>
</comment>
<comment type="similarity">
    <text evidence="3">Belongs to the turreted BTV-fold inner capsid family.</text>
</comment>
<feature type="chain" id="PRO_0000403424" description="Inner capsid protein VP2">
    <location>
        <begin position="1"/>
        <end position="1238"/>
    </location>
</feature>
<feature type="region of interest" description="Disordered" evidence="2">
    <location>
        <begin position="1"/>
        <end position="35"/>
    </location>
</feature>
<feature type="compositionally biased region" description="Basic and acidic residues" evidence="2">
    <location>
        <begin position="7"/>
        <end position="30"/>
    </location>
</feature>
<keyword id="KW-0167">Capsid protein</keyword>
<keyword id="KW-1153">Inner capsid protein</keyword>
<keyword id="KW-1185">Reference proteome</keyword>
<keyword id="KW-1141">T=2 icosahedral capsid protein</keyword>
<keyword id="KW-0946">Virion</keyword>
<organismHost>
    <name type="scientific">Cryphonectria parasitica</name>
    <name type="common">Chestnut blight fungus</name>
    <name type="synonym">Endothia parasitica</name>
    <dbReference type="NCBI Taxonomy" id="5116"/>
</organismHost>
<organism>
    <name type="scientific">Cryphonectria parasitica mycoreovirus 1 (strain 9B21)</name>
    <name type="common">CpMYRV-1</name>
    <dbReference type="NCBI Taxonomy" id="230407"/>
    <lineage>
        <taxon>Viruses</taxon>
        <taxon>Riboviria</taxon>
        <taxon>Orthornavirae</taxon>
        <taxon>Duplornaviricota</taxon>
        <taxon>Resentoviricetes</taxon>
        <taxon>Reovirales</taxon>
        <taxon>Spinareoviridae</taxon>
        <taxon>Mycoreovirus</taxon>
        <taxon>Mycoreovirus 1</taxon>
    </lineage>
</organism>
<proteinExistence type="inferred from homology"/>
<protein>
    <recommendedName>
        <fullName>Inner capsid protein VP2</fullName>
    </recommendedName>
</protein>
<accession>Q7TDB5</accession>
<sequence>MSTSAKKTPESKTEDKIEPVIEQTSNDKPEPPPNKVDSVITVPTSLINQVIQTASLQENGIVALLNHARYISDINNIHVQSAETHPVPAVGLLGSPSLVSLKYTSTHSSVEFPTTTPHFYAARPIPSDNTSELLRIPPVNVVCDPFPFIPGMAKQYSVSNYNVRLMIDVSHPGIEMIIDPFSISNTKITVDGIQAFDINAFSGGLITDANSGFGSRGMPYIFSLISGLLAVSRKIGRFVMIDNIGNEKNRVLTDRIECPTVPGLSHMRGRFLKDDYERYPHVFEAIPLVTNLPWFRREIEDNVTTVPFGTNHSIPPPNVSNMKVAEYVYCGTDVTMAQFHSNFLDEVSSLRFSHVQYIRLLNSLVVNRNEITGYTTLLQFREYSAAHVPLQLSALDYSTFPYDRRTSDCLRFMVHYSAAFRVAFSDFTSSLISSIIQQSEIKTAADFNATHTGMGNTINNSTTSFHEVLRGFLENIRPTTSHDITRALSLEFFPSFYDLAPTSTHYGAVMATTFLTDLLTLAMTFVMHPVTYSYNPHLKAYAILEFCQAYFNQEVETLLQQSGWGTNVTGIVITDVPSIAPSRIESGVYSFTLLQPVNLQPLVPPPMWNLFTRTLAFLNAPFQTYTVSRPAIAYAQARNVVIPGVPIVPSGPYSRAPPVATYLLSVIQLATTYTTISKQVGLGMSTSKLAAAMTSWRVVVRAMILNFGEWFHGVYCFAAYNAALLYRLIMPYDNTPPTNWQAFPSVQEDLARLNLHNIHNAPRIIPTQAMFPHDDTRTVLGPKHMHSILALYHTPSSAHVCGKLNADKTVADWPDLVSFYYGIDPQEIVEIYKTVLNLASSFGESIQLSSEMSTGDLLSPDLRVLLRSGIMAKVFSARTFQLFAKFLGVGVTDGSIMSQSGSLIDMFNTDPRIYFPNTGMTTVFTDQLIQSNPVGDMIRPAVRNNFRILLDSVFGPEGMMPITSGFTASLEMHSNLRFSLTHSIRQVEIIFGTGHQVQYDDGLRGLHIFSCTANQIDATGQRVPIGNMIAFAHIEQLIDNLSTIVGYSVVRPIAIVPEINQLPAVLVEDIITAFLGNVICLSFPEHRVVRSYAYLSPASVVAATQLERNLVREILEDRTVTHCHHIRIFDTEIIQGVFETTMRKPLLPQRPKCPVELTTHLHTPNARVGGTPINFDRFLPLVEVDASGRLLATNQRGVKRDAITTRPYALRTPLLVWMQSPYQKLEGTVHSQTVRVGI</sequence>
<name>CAPSD_MYRV9</name>